<dbReference type="EMBL" id="CH916367">
    <property type="protein sequence ID" value="EDW00939.1"/>
    <property type="molecule type" value="Genomic_DNA"/>
</dbReference>
<dbReference type="SMR" id="B4J6N6"/>
<dbReference type="FunCoup" id="B4J6N6">
    <property type="interactions" value="359"/>
</dbReference>
<dbReference type="STRING" id="7222.B4J6N6"/>
<dbReference type="EnsemblMetazoa" id="FBtr0156153">
    <property type="protein sequence ID" value="FBpp0154645"/>
    <property type="gene ID" value="FBgn0128202"/>
</dbReference>
<dbReference type="EnsemblMetazoa" id="XM_001986036.2">
    <property type="protein sequence ID" value="XP_001986072.1"/>
    <property type="gene ID" value="LOC6559116"/>
</dbReference>
<dbReference type="GeneID" id="6559116"/>
<dbReference type="KEGG" id="dgr:6559116"/>
<dbReference type="eggNOG" id="KOG4795">
    <property type="taxonomic scope" value="Eukaryota"/>
</dbReference>
<dbReference type="HOGENOM" id="CLU_025755_2_1_1"/>
<dbReference type="InParanoid" id="B4J6N6"/>
<dbReference type="OMA" id="SSHMGKQ"/>
<dbReference type="OrthoDB" id="125903at2759"/>
<dbReference type="PhylomeDB" id="B4J6N6"/>
<dbReference type="Proteomes" id="UP000001070">
    <property type="component" value="Unassembled WGS sequence"/>
</dbReference>
<dbReference type="GO" id="GO:0005654">
    <property type="term" value="C:nucleoplasm"/>
    <property type="evidence" value="ECO:0000250"/>
    <property type="project" value="UniProtKB"/>
</dbReference>
<dbReference type="GO" id="GO:0032783">
    <property type="term" value="C:super elongation complex"/>
    <property type="evidence" value="ECO:0007669"/>
    <property type="project" value="EnsemblMetazoa"/>
</dbReference>
<dbReference type="GO" id="GO:0003711">
    <property type="term" value="F:transcription elongation factor activity"/>
    <property type="evidence" value="ECO:0007669"/>
    <property type="project" value="TreeGrafter"/>
</dbReference>
<dbReference type="GO" id="GO:0034605">
    <property type="term" value="P:cellular response to heat"/>
    <property type="evidence" value="ECO:0007669"/>
    <property type="project" value="EnsemblMetazoa"/>
</dbReference>
<dbReference type="GO" id="GO:0045893">
    <property type="term" value="P:positive regulation of DNA-templated transcription"/>
    <property type="evidence" value="ECO:0000250"/>
    <property type="project" value="UniProtKB"/>
</dbReference>
<dbReference type="GO" id="GO:0006368">
    <property type="term" value="P:transcription elongation by RNA polymerase II"/>
    <property type="evidence" value="ECO:0007669"/>
    <property type="project" value="InterPro"/>
</dbReference>
<dbReference type="InterPro" id="IPR027093">
    <property type="entry name" value="EAF_fam"/>
</dbReference>
<dbReference type="InterPro" id="IPR019194">
    <property type="entry name" value="Tscrpt_elong_fac_Eaf_N"/>
</dbReference>
<dbReference type="PANTHER" id="PTHR15970">
    <property type="entry name" value="ELL-ASSOCIATED FACTOR EAF"/>
    <property type="match status" value="1"/>
</dbReference>
<dbReference type="PANTHER" id="PTHR15970:SF2">
    <property type="entry name" value="ELL-ASSOCIATED FACTOR EAF"/>
    <property type="match status" value="1"/>
</dbReference>
<dbReference type="Pfam" id="PF09816">
    <property type="entry name" value="EAF"/>
    <property type="match status" value="1"/>
</dbReference>
<name>EAF_DROGR</name>
<gene>
    <name evidence="1" type="primary">Eaf</name>
    <name type="ORF">GH20739</name>
</gene>
<keyword id="KW-0010">Activator</keyword>
<keyword id="KW-0217">Developmental protein</keyword>
<keyword id="KW-0539">Nucleus</keyword>
<keyword id="KW-0597">Phosphoprotein</keyword>
<keyword id="KW-1185">Reference proteome</keyword>
<keyword id="KW-0804">Transcription</keyword>
<keyword id="KW-0805">Transcription regulation</keyword>
<reference evidence="5" key="1">
    <citation type="journal article" date="2007" name="Nature">
        <title>Evolution of genes and genomes on the Drosophila phylogeny.</title>
        <authorList>
            <consortium name="Drosophila 12 genomes consortium"/>
        </authorList>
    </citation>
    <scope>NUCLEOTIDE SEQUENCE [LARGE SCALE GENOMIC DNA]</scope>
    <source>
        <strain evidence="5">Tucson 15287-2541.00</strain>
    </source>
</reference>
<protein>
    <recommendedName>
        <fullName evidence="1">Ell-associated factor Eaf</fullName>
    </recommendedName>
</protein>
<feature type="chain" id="PRO_0000386600" description="Ell-associated factor Eaf">
    <location>
        <begin position="1"/>
        <end position="529"/>
    </location>
</feature>
<feature type="region of interest" description="Disordered" evidence="4">
    <location>
        <begin position="155"/>
        <end position="235"/>
    </location>
</feature>
<feature type="region of interest" description="Disordered" evidence="4">
    <location>
        <begin position="253"/>
        <end position="529"/>
    </location>
</feature>
<feature type="compositionally biased region" description="Polar residues" evidence="4">
    <location>
        <begin position="167"/>
        <end position="186"/>
    </location>
</feature>
<feature type="compositionally biased region" description="Low complexity" evidence="4">
    <location>
        <begin position="194"/>
        <end position="215"/>
    </location>
</feature>
<feature type="compositionally biased region" description="Low complexity" evidence="4">
    <location>
        <begin position="256"/>
        <end position="265"/>
    </location>
</feature>
<feature type="compositionally biased region" description="Low complexity" evidence="4">
    <location>
        <begin position="306"/>
        <end position="315"/>
    </location>
</feature>
<feature type="compositionally biased region" description="Low complexity" evidence="4">
    <location>
        <begin position="327"/>
        <end position="346"/>
    </location>
</feature>
<feature type="compositionally biased region" description="Polar residues" evidence="4">
    <location>
        <begin position="347"/>
        <end position="359"/>
    </location>
</feature>
<feature type="compositionally biased region" description="Acidic residues" evidence="4">
    <location>
        <begin position="401"/>
        <end position="416"/>
    </location>
</feature>
<feature type="compositionally biased region" description="Low complexity" evidence="4">
    <location>
        <begin position="431"/>
        <end position="451"/>
    </location>
</feature>
<feature type="compositionally biased region" description="Low complexity" evidence="4">
    <location>
        <begin position="469"/>
        <end position="480"/>
    </location>
</feature>
<feature type="compositionally biased region" description="Low complexity" evidence="4">
    <location>
        <begin position="488"/>
        <end position="499"/>
    </location>
</feature>
<feature type="compositionally biased region" description="Low complexity" evidence="4">
    <location>
        <begin position="510"/>
        <end position="523"/>
    </location>
</feature>
<feature type="modified residue" description="Phosphoserine" evidence="1">
    <location>
        <position position="196"/>
    </location>
</feature>
<accession>B4J6N6</accession>
<organism>
    <name type="scientific">Drosophila grimshawi</name>
    <name type="common">Hawaiian fruit fly</name>
    <name type="synonym">Idiomyia grimshawi</name>
    <dbReference type="NCBI Taxonomy" id="7222"/>
    <lineage>
        <taxon>Eukaryota</taxon>
        <taxon>Metazoa</taxon>
        <taxon>Ecdysozoa</taxon>
        <taxon>Arthropoda</taxon>
        <taxon>Hexapoda</taxon>
        <taxon>Insecta</taxon>
        <taxon>Pterygota</taxon>
        <taxon>Neoptera</taxon>
        <taxon>Endopterygota</taxon>
        <taxon>Diptera</taxon>
        <taxon>Brachycera</taxon>
        <taxon>Muscomorpha</taxon>
        <taxon>Ephydroidea</taxon>
        <taxon>Drosophilidae</taxon>
        <taxon>Drosophila</taxon>
        <taxon>Hawaiian Drosophila</taxon>
    </lineage>
</organism>
<comment type="function">
    <text evidence="1">Promotes transcriptional elongation by Su(Tpl)/ELL. Essential for development (By similarity).</text>
</comment>
<comment type="subcellular location">
    <subcellularLocation>
        <location evidence="2">Nucleus</location>
    </subcellularLocation>
</comment>
<comment type="similarity">
    <text evidence="3">Belongs to the EAF family.</text>
</comment>
<sequence length="529" mass="58139">MMMTKQKPTLTERLNLGDEVRELKLGATFNPKNTSTAFHTIKYDFKPASVDTSRMATVDVGSNNQVTVTVPNLESSGVPHTVYKGNHKKYTKECLIIYDKETGVITLEKLNHNIQVKKTRSEMTNKPSLMPAANAGPLMSGANGGGPIPSSMMAAAGSGSGTAPKLENSTMRISSKTKVSTGSRRNNIIDFKPRNSPMQQSSPSRPVVSHRSPQSAPAWHANNAQQTLPSIPMITDDDDFGLNAALHNGGGHANISGSSTGSSSGQPDYVSSSHMGKQRQALPQGHAKRQQMTQQRSSPPMHHQQHQNQQQQQQNYGRVGGSSNYAQQQHQQQMQQQQQQHQQQQQRASFSHSNHSNSMPLDINSPSHHDHVTQSVAQAAAVLEQQIGGEPSASSSSSESDSSDTDSGSDSDDSTDDDRPTQQKQQNSATHQQQHHQMQQQHQQQQQHMHQLPNLGLGSISPAYNSHYQHQQQQQQPPQQHSHHHHQQQQQQQQQQQQSGIYASNGGFPNDLLQNDLQLSSNSSDDDDD</sequence>
<evidence type="ECO:0000250" key="1">
    <source>
        <dbReference type="UniProtKB" id="Q7JRJ1"/>
    </source>
</evidence>
<evidence type="ECO:0000250" key="2">
    <source>
        <dbReference type="UniProtKB" id="Q96JC9"/>
    </source>
</evidence>
<evidence type="ECO:0000255" key="3"/>
<evidence type="ECO:0000256" key="4">
    <source>
        <dbReference type="SAM" id="MobiDB-lite"/>
    </source>
</evidence>
<evidence type="ECO:0000312" key="5">
    <source>
        <dbReference type="EMBL" id="EDW00939.1"/>
    </source>
</evidence>
<proteinExistence type="inferred from homology"/>